<comment type="function">
    <text evidence="1">Together with LptE, is involved in the assembly of lipopolysaccharide (LPS) at the surface of the outer membrane.</text>
</comment>
<comment type="subunit">
    <text evidence="1">Component of the lipopolysaccharide transport and assembly complex. Interacts with LptE and LptA.</text>
</comment>
<comment type="subcellular location">
    <subcellularLocation>
        <location evidence="1">Cell outer membrane</location>
    </subcellularLocation>
</comment>
<comment type="similarity">
    <text evidence="1">Belongs to the LptD family.</text>
</comment>
<comment type="sequence caution" evidence="2">
    <conflict type="erroneous initiation">
        <sequence resource="EMBL-CDS" id="ABM44213"/>
    </conflict>
</comment>
<keyword id="KW-0998">Cell outer membrane</keyword>
<keyword id="KW-0472">Membrane</keyword>
<keyword id="KW-0732">Signal</keyword>
<name>LPTD_ACISJ</name>
<protein>
    <recommendedName>
        <fullName evidence="1">LPS-assembly protein LptD</fullName>
    </recommendedName>
</protein>
<reference key="1">
    <citation type="submission" date="2006-12" db="EMBL/GenBank/DDBJ databases">
        <title>Complete sequence of chromosome 1 of Acidovorax sp. JS42.</title>
        <authorList>
            <person name="Copeland A."/>
            <person name="Lucas S."/>
            <person name="Lapidus A."/>
            <person name="Barry K."/>
            <person name="Detter J.C."/>
            <person name="Glavina del Rio T."/>
            <person name="Dalin E."/>
            <person name="Tice H."/>
            <person name="Pitluck S."/>
            <person name="Chertkov O."/>
            <person name="Brettin T."/>
            <person name="Bruce D."/>
            <person name="Han C."/>
            <person name="Tapia R."/>
            <person name="Gilna P."/>
            <person name="Schmutz J."/>
            <person name="Larimer F."/>
            <person name="Land M."/>
            <person name="Hauser L."/>
            <person name="Kyrpides N."/>
            <person name="Kim E."/>
            <person name="Stahl D."/>
            <person name="Richardson P."/>
        </authorList>
    </citation>
    <scope>NUCLEOTIDE SEQUENCE [LARGE SCALE GENOMIC DNA]</scope>
    <source>
        <strain>JS42</strain>
    </source>
</reference>
<sequence>MDRLPLPHALHVPTHRPFAAPLPPRRLLARLAALMLCGVPLAVLAQAQPSQDAAPAEPPPALRSSPRLQEVLPYGIRQQLPVFVRGDRVTGQPDIQATIEGNAELRRGDTVVHADRMQYDVADDRARASGNVLINRAGNRYEGSQLDLRVEAFTGFFSDARYRFLETAAHGQASRVDFLDRDRSVVHNATYTTCERTDEASWQPDWILRAERIHLDRVEDVGTAENGVLEFKGVPVLPIPRITFPLSDRRKSGLLPPTLGLDSVSGFEYAQPYYWNIAPNRDATITPTVMTRRGVALGTEFRYLEPRYSGELTADYMPNDRLRDRDRWAYGIKHRATFDTPAGGVGLGIDIKRVSDDNYWRDFSQRNSGRSGVNDQLTQRLLPGDATLNWARGEHSLLLRTLKWQTLQDVNAPIIPPYDRMPQLRWEYRPLQLAGGLDASVEADYTSFHADRAYTGQPNAKRSYTMAQVSRPFLAPAGFITPRVQLHSTHYEFDAPLANGQRTASRTLPTFSLDSGLVFERDARYFGRDFLQTLEPRAFYTYTPYRDQRLLPIYDTAVNDFNFASIYTENAFGGQDRLADNNLLTLGVTTRLLDPDTGAEAARFGVAQRVRFSDQEVTMPGGSPVNERLSDVLLGAGINWTPQWGFDSTVQYNPKTGRSLRTTVGARYSPGNYRTVSAAYRMQKVTGLITEPSEQIDVGWQWPLNDLWGDRGDKPSSAGGRWYSVGRLNYSLQDRKLVDTVVGLEYESCCWIGRVVLERLQRSVTSSNTRLMFQIEFIGFSRLSLGSNPLSSLKQNVPRYQFLRESVSTPSRFTQYD</sequence>
<organism>
    <name type="scientific">Acidovorax sp. (strain JS42)</name>
    <dbReference type="NCBI Taxonomy" id="232721"/>
    <lineage>
        <taxon>Bacteria</taxon>
        <taxon>Pseudomonadati</taxon>
        <taxon>Pseudomonadota</taxon>
        <taxon>Betaproteobacteria</taxon>
        <taxon>Burkholderiales</taxon>
        <taxon>Comamonadaceae</taxon>
        <taxon>Acidovorax</taxon>
    </lineage>
</organism>
<gene>
    <name evidence="1" type="primary">lptD</name>
    <name type="synonym">imp</name>
    <name type="synonym">ostA</name>
    <name type="ordered locus">Ajs_4112</name>
</gene>
<evidence type="ECO:0000255" key="1">
    <source>
        <dbReference type="HAMAP-Rule" id="MF_01411"/>
    </source>
</evidence>
<evidence type="ECO:0000305" key="2"/>
<dbReference type="EMBL" id="CP000539">
    <property type="protein sequence ID" value="ABM44213.1"/>
    <property type="status" value="ALT_INIT"/>
    <property type="molecule type" value="Genomic_DNA"/>
</dbReference>
<dbReference type="SMR" id="A1WD88"/>
<dbReference type="STRING" id="232721.Ajs_4112"/>
<dbReference type="KEGG" id="ajs:Ajs_4112"/>
<dbReference type="eggNOG" id="COG1452">
    <property type="taxonomic scope" value="Bacteria"/>
</dbReference>
<dbReference type="HOGENOM" id="CLU_009039_0_0_4"/>
<dbReference type="Proteomes" id="UP000000645">
    <property type="component" value="Chromosome"/>
</dbReference>
<dbReference type="GO" id="GO:0009279">
    <property type="term" value="C:cell outer membrane"/>
    <property type="evidence" value="ECO:0007669"/>
    <property type="project" value="UniProtKB-SubCell"/>
</dbReference>
<dbReference type="GO" id="GO:1990351">
    <property type="term" value="C:transporter complex"/>
    <property type="evidence" value="ECO:0007669"/>
    <property type="project" value="TreeGrafter"/>
</dbReference>
<dbReference type="GO" id="GO:0043165">
    <property type="term" value="P:Gram-negative-bacterium-type cell outer membrane assembly"/>
    <property type="evidence" value="ECO:0007669"/>
    <property type="project" value="UniProtKB-UniRule"/>
</dbReference>
<dbReference type="GO" id="GO:0015920">
    <property type="term" value="P:lipopolysaccharide transport"/>
    <property type="evidence" value="ECO:0007669"/>
    <property type="project" value="InterPro"/>
</dbReference>
<dbReference type="HAMAP" id="MF_01411">
    <property type="entry name" value="LPS_assembly_LptD"/>
    <property type="match status" value="1"/>
</dbReference>
<dbReference type="InterPro" id="IPR020889">
    <property type="entry name" value="LipoPS_assembly_LptD"/>
</dbReference>
<dbReference type="InterPro" id="IPR050218">
    <property type="entry name" value="LptD"/>
</dbReference>
<dbReference type="InterPro" id="IPR045659">
    <property type="entry name" value="LptD_2"/>
</dbReference>
<dbReference type="InterPro" id="IPR007543">
    <property type="entry name" value="LptD_C"/>
</dbReference>
<dbReference type="PANTHER" id="PTHR30189">
    <property type="entry name" value="LPS-ASSEMBLY PROTEIN"/>
    <property type="match status" value="1"/>
</dbReference>
<dbReference type="PANTHER" id="PTHR30189:SF1">
    <property type="entry name" value="LPS-ASSEMBLY PROTEIN LPTD"/>
    <property type="match status" value="1"/>
</dbReference>
<dbReference type="Pfam" id="PF04453">
    <property type="entry name" value="LptD"/>
    <property type="match status" value="1"/>
</dbReference>
<dbReference type="Pfam" id="PF19838">
    <property type="entry name" value="LptD_2"/>
    <property type="match status" value="1"/>
</dbReference>
<accession>A1WD88</accession>
<proteinExistence type="inferred from homology"/>
<feature type="signal peptide" evidence="1">
    <location>
        <begin position="1"/>
        <end position="45"/>
    </location>
</feature>
<feature type="chain" id="PRO_0000281583" description="LPS-assembly protein LptD">
    <location>
        <begin position="46"/>
        <end position="817"/>
    </location>
</feature>